<name>FABZ_PETMO</name>
<dbReference type="EC" id="4.2.1.59" evidence="1"/>
<dbReference type="EMBL" id="CP000879">
    <property type="protein sequence ID" value="ABX31757.1"/>
    <property type="molecule type" value="Genomic_DNA"/>
</dbReference>
<dbReference type="RefSeq" id="WP_012208860.1">
    <property type="nucleotide sequence ID" value="NC_010003.1"/>
</dbReference>
<dbReference type="SMR" id="A9BK14"/>
<dbReference type="STRING" id="403833.Pmob_1036"/>
<dbReference type="KEGG" id="pmo:Pmob_1036"/>
<dbReference type="eggNOG" id="COG0764">
    <property type="taxonomic scope" value="Bacteria"/>
</dbReference>
<dbReference type="HOGENOM" id="CLU_078912_1_2_0"/>
<dbReference type="OrthoDB" id="9772788at2"/>
<dbReference type="Proteomes" id="UP000000789">
    <property type="component" value="Chromosome"/>
</dbReference>
<dbReference type="GO" id="GO:0005737">
    <property type="term" value="C:cytoplasm"/>
    <property type="evidence" value="ECO:0007669"/>
    <property type="project" value="UniProtKB-SubCell"/>
</dbReference>
<dbReference type="GO" id="GO:0016020">
    <property type="term" value="C:membrane"/>
    <property type="evidence" value="ECO:0007669"/>
    <property type="project" value="GOC"/>
</dbReference>
<dbReference type="GO" id="GO:0019171">
    <property type="term" value="F:(3R)-hydroxyacyl-[acyl-carrier-protein] dehydratase activity"/>
    <property type="evidence" value="ECO:0007669"/>
    <property type="project" value="UniProtKB-EC"/>
</dbReference>
<dbReference type="GO" id="GO:0006633">
    <property type="term" value="P:fatty acid biosynthetic process"/>
    <property type="evidence" value="ECO:0007669"/>
    <property type="project" value="UniProtKB-UniRule"/>
</dbReference>
<dbReference type="GO" id="GO:0009245">
    <property type="term" value="P:lipid A biosynthetic process"/>
    <property type="evidence" value="ECO:0007669"/>
    <property type="project" value="UniProtKB-UniRule"/>
</dbReference>
<dbReference type="CDD" id="cd01288">
    <property type="entry name" value="FabZ"/>
    <property type="match status" value="1"/>
</dbReference>
<dbReference type="FunFam" id="3.10.129.10:FF:000001">
    <property type="entry name" value="3-hydroxyacyl-[acyl-carrier-protein] dehydratase FabZ"/>
    <property type="match status" value="1"/>
</dbReference>
<dbReference type="Gene3D" id="3.10.129.10">
    <property type="entry name" value="Hotdog Thioesterase"/>
    <property type="match status" value="1"/>
</dbReference>
<dbReference type="HAMAP" id="MF_00406">
    <property type="entry name" value="FabZ"/>
    <property type="match status" value="1"/>
</dbReference>
<dbReference type="InterPro" id="IPR013114">
    <property type="entry name" value="FabA_FabZ"/>
</dbReference>
<dbReference type="InterPro" id="IPR010084">
    <property type="entry name" value="FabZ"/>
</dbReference>
<dbReference type="InterPro" id="IPR029069">
    <property type="entry name" value="HotDog_dom_sf"/>
</dbReference>
<dbReference type="NCBIfam" id="TIGR01750">
    <property type="entry name" value="fabZ"/>
    <property type="match status" value="1"/>
</dbReference>
<dbReference type="NCBIfam" id="NF000582">
    <property type="entry name" value="PRK00006.1"/>
    <property type="match status" value="1"/>
</dbReference>
<dbReference type="PANTHER" id="PTHR30272">
    <property type="entry name" value="3-HYDROXYACYL-[ACYL-CARRIER-PROTEIN] DEHYDRATASE"/>
    <property type="match status" value="1"/>
</dbReference>
<dbReference type="PANTHER" id="PTHR30272:SF1">
    <property type="entry name" value="3-HYDROXYACYL-[ACYL-CARRIER-PROTEIN] DEHYDRATASE"/>
    <property type="match status" value="1"/>
</dbReference>
<dbReference type="Pfam" id="PF07977">
    <property type="entry name" value="FabA"/>
    <property type="match status" value="1"/>
</dbReference>
<dbReference type="SUPFAM" id="SSF54637">
    <property type="entry name" value="Thioesterase/thiol ester dehydrase-isomerase"/>
    <property type="match status" value="1"/>
</dbReference>
<keyword id="KW-0963">Cytoplasm</keyword>
<keyword id="KW-0441">Lipid A biosynthesis</keyword>
<keyword id="KW-0444">Lipid biosynthesis</keyword>
<keyword id="KW-0443">Lipid metabolism</keyword>
<keyword id="KW-0456">Lyase</keyword>
<protein>
    <recommendedName>
        <fullName evidence="1">3-hydroxyacyl-[acyl-carrier-protein] dehydratase FabZ</fullName>
        <ecNumber evidence="1">4.2.1.59</ecNumber>
    </recommendedName>
    <alternativeName>
        <fullName evidence="1">(3R)-hydroxymyristoyl-[acyl-carrier-protein] dehydratase</fullName>
        <shortName evidence="1">(3R)-hydroxymyristoyl-ACP dehydrase</shortName>
    </alternativeName>
    <alternativeName>
        <fullName evidence="1">Beta-hydroxyacyl-ACP dehydratase</fullName>
    </alternativeName>
</protein>
<evidence type="ECO:0000255" key="1">
    <source>
        <dbReference type="HAMAP-Rule" id="MF_00406"/>
    </source>
</evidence>
<feature type="chain" id="PRO_1000080442" description="3-hydroxyacyl-[acyl-carrier-protein] dehydratase FabZ">
    <location>
        <begin position="1"/>
        <end position="139"/>
    </location>
</feature>
<feature type="active site" evidence="1">
    <location>
        <position position="46"/>
    </location>
</feature>
<comment type="function">
    <text evidence="1">Involved in unsaturated fatty acids biosynthesis. Catalyzes the dehydration of short chain beta-hydroxyacyl-ACPs and long chain saturated and unsaturated beta-hydroxyacyl-ACPs.</text>
</comment>
<comment type="catalytic activity">
    <reaction evidence="1">
        <text>a (3R)-hydroxyacyl-[ACP] = a (2E)-enoyl-[ACP] + H2O</text>
        <dbReference type="Rhea" id="RHEA:13097"/>
        <dbReference type="Rhea" id="RHEA-COMP:9925"/>
        <dbReference type="Rhea" id="RHEA-COMP:9945"/>
        <dbReference type="ChEBI" id="CHEBI:15377"/>
        <dbReference type="ChEBI" id="CHEBI:78784"/>
        <dbReference type="ChEBI" id="CHEBI:78827"/>
        <dbReference type="EC" id="4.2.1.59"/>
    </reaction>
</comment>
<comment type="subcellular location">
    <subcellularLocation>
        <location evidence="1">Cytoplasm</location>
    </subcellularLocation>
</comment>
<comment type="similarity">
    <text evidence="1">Belongs to the thioester dehydratase family. FabZ subfamily.</text>
</comment>
<reference key="1">
    <citation type="submission" date="2007-11" db="EMBL/GenBank/DDBJ databases">
        <title>Complete sequence of Petroga mobilis SJ95.</title>
        <authorList>
            <consortium name="US DOE Joint Genome Institute"/>
            <person name="Copeland A."/>
            <person name="Lucas S."/>
            <person name="Lapidus A."/>
            <person name="Barry K."/>
            <person name="Glavina del Rio T."/>
            <person name="Dalin E."/>
            <person name="Tice H."/>
            <person name="Pitluck S."/>
            <person name="Meincke L."/>
            <person name="Brettin T."/>
            <person name="Bruce D."/>
            <person name="Detter J.C."/>
            <person name="Han C."/>
            <person name="Kuske C.R."/>
            <person name="Schmutz J."/>
            <person name="Larimer F."/>
            <person name="Land M."/>
            <person name="Hauser L."/>
            <person name="Kyrpides N."/>
            <person name="Mikhailova N."/>
            <person name="Noll K."/>
            <person name="Richardson P."/>
        </authorList>
    </citation>
    <scope>NUCLEOTIDE SEQUENCE [LARGE SCALE GENOMIC DNA]</scope>
    <source>
        <strain>DSM 10674 / SJ95</strain>
    </source>
</reference>
<organism>
    <name type="scientific">Petrotoga mobilis (strain DSM 10674 / SJ95)</name>
    <dbReference type="NCBI Taxonomy" id="403833"/>
    <lineage>
        <taxon>Bacteria</taxon>
        <taxon>Thermotogati</taxon>
        <taxon>Thermotogota</taxon>
        <taxon>Thermotogae</taxon>
        <taxon>Petrotogales</taxon>
        <taxon>Petrotogaceae</taxon>
        <taxon>Petrotoga</taxon>
    </lineage>
</organism>
<sequence>MNIEEIMKILPHRYPFLLVDGVLELNEEKIKAFKNVSINESFFQGHFPNYPIMPGVLIVEGMAQTAGLLLLKDTDENVIPLFTGIDKARFKKEVRPGDKLIYDLEILQKKANMFKLKGIATVEEQVCAQAEIMVGIKKS</sequence>
<accession>A9BK14</accession>
<gene>
    <name evidence="1" type="primary">fabZ</name>
    <name type="ordered locus">Pmob_1036</name>
</gene>
<proteinExistence type="inferred from homology"/>